<keyword id="KW-0687">Ribonucleoprotein</keyword>
<keyword id="KW-0689">Ribosomal protein</keyword>
<keyword id="KW-0694">RNA-binding</keyword>
<keyword id="KW-0699">rRNA-binding</keyword>
<protein>
    <recommendedName>
        <fullName evidence="1">Small ribosomal subunit protein uS3</fullName>
    </recommendedName>
    <alternativeName>
        <fullName evidence="3">30S ribosomal protein S3</fullName>
    </alternativeName>
</protein>
<gene>
    <name evidence="1" type="primary">rpsC</name>
    <name type="ordered locus">Franean1_6043</name>
</gene>
<proteinExistence type="inferred from homology"/>
<evidence type="ECO:0000255" key="1">
    <source>
        <dbReference type="HAMAP-Rule" id="MF_01309"/>
    </source>
</evidence>
<evidence type="ECO:0000256" key="2">
    <source>
        <dbReference type="SAM" id="MobiDB-lite"/>
    </source>
</evidence>
<evidence type="ECO:0000305" key="3"/>
<name>RS3_PARS2</name>
<comment type="function">
    <text evidence="1">Binds the lower part of the 30S subunit head. Binds mRNA in the 70S ribosome, positioning it for translation.</text>
</comment>
<comment type="subunit">
    <text evidence="1">Part of the 30S ribosomal subunit. Forms a tight complex with proteins S10 and S14.</text>
</comment>
<comment type="similarity">
    <text evidence="1">Belongs to the universal ribosomal protein uS3 family.</text>
</comment>
<accession>A8LC50</accession>
<dbReference type="EMBL" id="CP000820">
    <property type="protein sequence ID" value="ABW15387.1"/>
    <property type="molecule type" value="Genomic_DNA"/>
</dbReference>
<dbReference type="RefSeq" id="WP_020463475.1">
    <property type="nucleotide sequence ID" value="NC_009921.1"/>
</dbReference>
<dbReference type="SMR" id="A8LC50"/>
<dbReference type="STRING" id="298653.Franean1_6043"/>
<dbReference type="KEGG" id="fre:Franean1_6043"/>
<dbReference type="eggNOG" id="COG0092">
    <property type="taxonomic scope" value="Bacteria"/>
</dbReference>
<dbReference type="HOGENOM" id="CLU_058591_0_0_11"/>
<dbReference type="GO" id="GO:0022627">
    <property type="term" value="C:cytosolic small ribosomal subunit"/>
    <property type="evidence" value="ECO:0007669"/>
    <property type="project" value="TreeGrafter"/>
</dbReference>
<dbReference type="GO" id="GO:0003729">
    <property type="term" value="F:mRNA binding"/>
    <property type="evidence" value="ECO:0007669"/>
    <property type="project" value="UniProtKB-UniRule"/>
</dbReference>
<dbReference type="GO" id="GO:0019843">
    <property type="term" value="F:rRNA binding"/>
    <property type="evidence" value="ECO:0007669"/>
    <property type="project" value="UniProtKB-UniRule"/>
</dbReference>
<dbReference type="GO" id="GO:0003735">
    <property type="term" value="F:structural constituent of ribosome"/>
    <property type="evidence" value="ECO:0007669"/>
    <property type="project" value="InterPro"/>
</dbReference>
<dbReference type="GO" id="GO:0006412">
    <property type="term" value="P:translation"/>
    <property type="evidence" value="ECO:0007669"/>
    <property type="project" value="UniProtKB-UniRule"/>
</dbReference>
<dbReference type="CDD" id="cd02412">
    <property type="entry name" value="KH-II_30S_S3"/>
    <property type="match status" value="1"/>
</dbReference>
<dbReference type="FunFam" id="3.30.1140.32:FF:000002">
    <property type="entry name" value="30S ribosomal protein S3"/>
    <property type="match status" value="1"/>
</dbReference>
<dbReference type="FunFam" id="3.30.300.20:FF:000001">
    <property type="entry name" value="30S ribosomal protein S3"/>
    <property type="match status" value="1"/>
</dbReference>
<dbReference type="Gene3D" id="3.30.300.20">
    <property type="match status" value="1"/>
</dbReference>
<dbReference type="Gene3D" id="3.30.1140.32">
    <property type="entry name" value="Ribosomal protein S3, C-terminal domain"/>
    <property type="match status" value="1"/>
</dbReference>
<dbReference type="HAMAP" id="MF_01309_B">
    <property type="entry name" value="Ribosomal_uS3_B"/>
    <property type="match status" value="1"/>
</dbReference>
<dbReference type="InterPro" id="IPR004087">
    <property type="entry name" value="KH_dom"/>
</dbReference>
<dbReference type="InterPro" id="IPR015946">
    <property type="entry name" value="KH_dom-like_a/b"/>
</dbReference>
<dbReference type="InterPro" id="IPR004044">
    <property type="entry name" value="KH_dom_type_2"/>
</dbReference>
<dbReference type="InterPro" id="IPR009019">
    <property type="entry name" value="KH_sf_prok-type"/>
</dbReference>
<dbReference type="InterPro" id="IPR036419">
    <property type="entry name" value="Ribosomal_S3_C_sf"/>
</dbReference>
<dbReference type="InterPro" id="IPR005704">
    <property type="entry name" value="Ribosomal_uS3_bac-typ"/>
</dbReference>
<dbReference type="InterPro" id="IPR001351">
    <property type="entry name" value="Ribosomal_uS3_C"/>
</dbReference>
<dbReference type="InterPro" id="IPR018280">
    <property type="entry name" value="Ribosomal_uS3_CS"/>
</dbReference>
<dbReference type="NCBIfam" id="TIGR01009">
    <property type="entry name" value="rpsC_bact"/>
    <property type="match status" value="1"/>
</dbReference>
<dbReference type="PANTHER" id="PTHR11760">
    <property type="entry name" value="30S/40S RIBOSOMAL PROTEIN S3"/>
    <property type="match status" value="1"/>
</dbReference>
<dbReference type="PANTHER" id="PTHR11760:SF19">
    <property type="entry name" value="SMALL RIBOSOMAL SUBUNIT PROTEIN US3C"/>
    <property type="match status" value="1"/>
</dbReference>
<dbReference type="Pfam" id="PF07650">
    <property type="entry name" value="KH_2"/>
    <property type="match status" value="1"/>
</dbReference>
<dbReference type="Pfam" id="PF00189">
    <property type="entry name" value="Ribosomal_S3_C"/>
    <property type="match status" value="1"/>
</dbReference>
<dbReference type="SMART" id="SM00322">
    <property type="entry name" value="KH"/>
    <property type="match status" value="1"/>
</dbReference>
<dbReference type="SUPFAM" id="SSF54814">
    <property type="entry name" value="Prokaryotic type KH domain (KH-domain type II)"/>
    <property type="match status" value="1"/>
</dbReference>
<dbReference type="SUPFAM" id="SSF54821">
    <property type="entry name" value="Ribosomal protein S3 C-terminal domain"/>
    <property type="match status" value="1"/>
</dbReference>
<dbReference type="PROSITE" id="PS50823">
    <property type="entry name" value="KH_TYPE_2"/>
    <property type="match status" value="1"/>
</dbReference>
<dbReference type="PROSITE" id="PS00548">
    <property type="entry name" value="RIBOSOMAL_S3"/>
    <property type="match status" value="1"/>
</dbReference>
<organism>
    <name type="scientific">Parafrankia sp. (strain EAN1pec)</name>
    <dbReference type="NCBI Taxonomy" id="298653"/>
    <lineage>
        <taxon>Bacteria</taxon>
        <taxon>Bacillati</taxon>
        <taxon>Actinomycetota</taxon>
        <taxon>Actinomycetes</taxon>
        <taxon>Frankiales</taxon>
        <taxon>Frankiaceae</taxon>
        <taxon>Parafrankia</taxon>
    </lineage>
</organism>
<sequence length="325" mass="35051">MGQKVNPHGFRLGITSEFTSRWYADKQYKAYVGEDVKIRKMMSKGMERAGISRVDIERTQGRLRVDIHTARPGIVIGRRGAEADRIRGDLEKLTGKQVQLNILEVKNPEIDAQLVAQGVAEQLSSRVSFRRAMRKAMQSAMKSGAKGIRVQCSGRLGGAEMSRSEFYREGRVPLHTLRADIDYGFYEARTNFGRIGVKVWIYKGDIVQSRAEREAQEALLRQQRRERPRRGPRSGSSGTTQGGTDAGRAAARAGDRRGRGGSGGGGGSAEKASAAEKAPAEKPATESAAVEGTPVETPAVTPETTAAPAAVTTAEAQGAPEKAEG</sequence>
<feature type="chain" id="PRO_1000140972" description="Small ribosomal subunit protein uS3">
    <location>
        <begin position="1"/>
        <end position="325"/>
    </location>
</feature>
<feature type="domain" description="KH type-2" evidence="1">
    <location>
        <begin position="38"/>
        <end position="106"/>
    </location>
</feature>
<feature type="region of interest" description="Disordered" evidence="2">
    <location>
        <begin position="217"/>
        <end position="325"/>
    </location>
</feature>
<feature type="compositionally biased region" description="Basic residues" evidence="2">
    <location>
        <begin position="222"/>
        <end position="232"/>
    </location>
</feature>
<feature type="compositionally biased region" description="Low complexity" evidence="2">
    <location>
        <begin position="285"/>
        <end position="316"/>
    </location>
</feature>
<reference key="1">
    <citation type="journal article" date="2007" name="Genome Res.">
        <title>Genome characteristics of facultatively symbiotic Frankia sp. strains reflect host range and host plant biogeography.</title>
        <authorList>
            <person name="Normand P."/>
            <person name="Lapierre P."/>
            <person name="Tisa L.S."/>
            <person name="Gogarten J.P."/>
            <person name="Alloisio N."/>
            <person name="Bagnarol E."/>
            <person name="Bassi C.A."/>
            <person name="Berry A.M."/>
            <person name="Bickhart D.M."/>
            <person name="Choisne N."/>
            <person name="Couloux A."/>
            <person name="Cournoyer B."/>
            <person name="Cruveiller S."/>
            <person name="Daubin V."/>
            <person name="Demange N."/>
            <person name="Francino M.P."/>
            <person name="Goltsman E."/>
            <person name="Huang Y."/>
            <person name="Kopp O.R."/>
            <person name="Labarre L."/>
            <person name="Lapidus A."/>
            <person name="Lavire C."/>
            <person name="Marechal J."/>
            <person name="Martinez M."/>
            <person name="Mastronunzio J.E."/>
            <person name="Mullin B.C."/>
            <person name="Niemann J."/>
            <person name="Pujic P."/>
            <person name="Rawnsley T."/>
            <person name="Rouy Z."/>
            <person name="Schenowitz C."/>
            <person name="Sellstedt A."/>
            <person name="Tavares F."/>
            <person name="Tomkins J.P."/>
            <person name="Vallenet D."/>
            <person name="Valverde C."/>
            <person name="Wall L.G."/>
            <person name="Wang Y."/>
            <person name="Medigue C."/>
            <person name="Benson D.R."/>
        </authorList>
    </citation>
    <scope>NUCLEOTIDE SEQUENCE [LARGE SCALE GENOMIC DNA]</scope>
    <source>
        <strain>EAN1pec</strain>
    </source>
</reference>